<name>DNJA3_HUMAN</name>
<keyword id="KW-0002">3D-structure</keyword>
<keyword id="KW-0007">Acetylation</keyword>
<keyword id="KW-0025">Alternative splicing</keyword>
<keyword id="KW-0053">Apoptosis</keyword>
<keyword id="KW-1003">Cell membrane</keyword>
<keyword id="KW-0143">Chaperone</keyword>
<keyword id="KW-0963">Cytoplasm</keyword>
<keyword id="KW-0472">Membrane</keyword>
<keyword id="KW-0479">Metal-binding</keyword>
<keyword id="KW-0488">Methylation</keyword>
<keyword id="KW-0496">Mitochondrion</keyword>
<keyword id="KW-0597">Phosphoprotein</keyword>
<keyword id="KW-0628">Postsynaptic cell membrane</keyword>
<keyword id="KW-1267">Proteomics identification</keyword>
<keyword id="KW-1185">Reference proteome</keyword>
<keyword id="KW-0677">Repeat</keyword>
<keyword id="KW-0770">Synapse</keyword>
<keyword id="KW-0809">Transit peptide</keyword>
<keyword id="KW-0862">Zinc</keyword>
<keyword id="KW-0863">Zinc-finger</keyword>
<reference key="1">
    <citation type="journal article" date="1998" name="Virology">
        <title>A novel human DnaJ protein, hTid-1, a homolog of the Drosophila tumor suppressor protein Tid56, can interact with the human papillomavirus type 16 E7 oncoprotein.</title>
        <authorList>
            <person name="Schilling B."/>
            <person name="De-Medina T."/>
            <person name="Syken J."/>
            <person name="Vidal M."/>
            <person name="Munger K."/>
        </authorList>
    </citation>
    <scope>NUCLEOTIDE SEQUENCE [MRNA] (ISOFORM 1)</scope>
    <scope>TISSUE SPECIFICITY</scope>
</reference>
<reference key="2">
    <citation type="journal article" date="2001" name="J. Biol. Chem.">
        <title>hTid-1, a human DnaJ protein, modulates the interferon signaling pathway.</title>
        <authorList>
            <person name="Sarkar S."/>
            <person name="Pollack B.P."/>
            <person name="Lin K.-T."/>
            <person name="Kotenko S.V."/>
            <person name="Cook J.R."/>
            <person name="Lewis A."/>
            <person name="Pestka S."/>
        </authorList>
    </citation>
    <scope>NUCLEOTIDE SEQUENCE [MRNA] (ISOFORM 2)</scope>
    <scope>INTERACTION WITH JAK2; HSP70 AND IFN-GAMMAR2</scope>
    <scope>VARIANT TYR-75</scope>
</reference>
<reference key="3">
    <citation type="journal article" date="2004" name="Nat. Genet.">
        <title>Complete sequencing and characterization of 21,243 full-length human cDNAs.</title>
        <authorList>
            <person name="Ota T."/>
            <person name="Suzuki Y."/>
            <person name="Nishikawa T."/>
            <person name="Otsuki T."/>
            <person name="Sugiyama T."/>
            <person name="Irie R."/>
            <person name="Wakamatsu A."/>
            <person name="Hayashi K."/>
            <person name="Sato H."/>
            <person name="Nagai K."/>
            <person name="Kimura K."/>
            <person name="Makita H."/>
            <person name="Sekine M."/>
            <person name="Obayashi M."/>
            <person name="Nishi T."/>
            <person name="Shibahara T."/>
            <person name="Tanaka T."/>
            <person name="Ishii S."/>
            <person name="Yamamoto J."/>
            <person name="Saito K."/>
            <person name="Kawai Y."/>
            <person name="Isono Y."/>
            <person name="Nakamura Y."/>
            <person name="Nagahari K."/>
            <person name="Murakami K."/>
            <person name="Yasuda T."/>
            <person name="Iwayanagi T."/>
            <person name="Wagatsuma M."/>
            <person name="Shiratori A."/>
            <person name="Sudo H."/>
            <person name="Hosoiri T."/>
            <person name="Kaku Y."/>
            <person name="Kodaira H."/>
            <person name="Kondo H."/>
            <person name="Sugawara M."/>
            <person name="Takahashi M."/>
            <person name="Kanda K."/>
            <person name="Yokoi T."/>
            <person name="Furuya T."/>
            <person name="Kikkawa E."/>
            <person name="Omura Y."/>
            <person name="Abe K."/>
            <person name="Kamihara K."/>
            <person name="Katsuta N."/>
            <person name="Sato K."/>
            <person name="Tanikawa M."/>
            <person name="Yamazaki M."/>
            <person name="Ninomiya K."/>
            <person name="Ishibashi T."/>
            <person name="Yamashita H."/>
            <person name="Murakawa K."/>
            <person name="Fujimori K."/>
            <person name="Tanai H."/>
            <person name="Kimata M."/>
            <person name="Watanabe M."/>
            <person name="Hiraoka S."/>
            <person name="Chiba Y."/>
            <person name="Ishida S."/>
            <person name="Ono Y."/>
            <person name="Takiguchi S."/>
            <person name="Watanabe S."/>
            <person name="Yosida M."/>
            <person name="Hotuta T."/>
            <person name="Kusano J."/>
            <person name="Kanehori K."/>
            <person name="Takahashi-Fujii A."/>
            <person name="Hara H."/>
            <person name="Tanase T.-O."/>
            <person name="Nomura Y."/>
            <person name="Togiya S."/>
            <person name="Komai F."/>
            <person name="Hara R."/>
            <person name="Takeuchi K."/>
            <person name="Arita M."/>
            <person name="Imose N."/>
            <person name="Musashino K."/>
            <person name="Yuuki H."/>
            <person name="Oshima A."/>
            <person name="Sasaki N."/>
            <person name="Aotsuka S."/>
            <person name="Yoshikawa Y."/>
            <person name="Matsunawa H."/>
            <person name="Ichihara T."/>
            <person name="Shiohata N."/>
            <person name="Sano S."/>
            <person name="Moriya S."/>
            <person name="Momiyama H."/>
            <person name="Satoh N."/>
            <person name="Takami S."/>
            <person name="Terashima Y."/>
            <person name="Suzuki O."/>
            <person name="Nakagawa S."/>
            <person name="Senoh A."/>
            <person name="Mizoguchi H."/>
            <person name="Goto Y."/>
            <person name="Shimizu F."/>
            <person name="Wakebe H."/>
            <person name="Hishigaki H."/>
            <person name="Watanabe T."/>
            <person name="Sugiyama A."/>
            <person name="Takemoto M."/>
            <person name="Kawakami B."/>
            <person name="Yamazaki M."/>
            <person name="Watanabe K."/>
            <person name="Kumagai A."/>
            <person name="Itakura S."/>
            <person name="Fukuzumi Y."/>
            <person name="Fujimori Y."/>
            <person name="Komiyama M."/>
            <person name="Tashiro H."/>
            <person name="Tanigami A."/>
            <person name="Fujiwara T."/>
            <person name="Ono T."/>
            <person name="Yamada K."/>
            <person name="Fujii Y."/>
            <person name="Ozaki K."/>
            <person name="Hirao M."/>
            <person name="Ohmori Y."/>
            <person name="Kawabata A."/>
            <person name="Hikiji T."/>
            <person name="Kobatake N."/>
            <person name="Inagaki H."/>
            <person name="Ikema Y."/>
            <person name="Okamoto S."/>
            <person name="Okitani R."/>
            <person name="Kawakami T."/>
            <person name="Noguchi S."/>
            <person name="Itoh T."/>
            <person name="Shigeta K."/>
            <person name="Senba T."/>
            <person name="Matsumura K."/>
            <person name="Nakajima Y."/>
            <person name="Mizuno T."/>
            <person name="Morinaga M."/>
            <person name="Sasaki M."/>
            <person name="Togashi T."/>
            <person name="Oyama M."/>
            <person name="Hata H."/>
            <person name="Watanabe M."/>
            <person name="Komatsu T."/>
            <person name="Mizushima-Sugano J."/>
            <person name="Satoh T."/>
            <person name="Shirai Y."/>
            <person name="Takahashi Y."/>
            <person name="Nakagawa K."/>
            <person name="Okumura K."/>
            <person name="Nagase T."/>
            <person name="Nomura N."/>
            <person name="Kikuchi H."/>
            <person name="Masuho Y."/>
            <person name="Yamashita R."/>
            <person name="Nakai K."/>
            <person name="Yada T."/>
            <person name="Nakamura Y."/>
            <person name="Ohara O."/>
            <person name="Isogai T."/>
            <person name="Sugano S."/>
        </authorList>
    </citation>
    <scope>NUCLEOTIDE SEQUENCE [LARGE SCALE MRNA] (ISOFORMS 1 AND 3)</scope>
    <scope>VARIANT TYR-75</scope>
    <source>
        <tissue>Corpus callosum</tissue>
        <tissue>Urinary bladder</tissue>
    </source>
</reference>
<reference key="4">
    <citation type="journal article" date="2004" name="Nature">
        <title>The sequence and analysis of duplication-rich human chromosome 16.</title>
        <authorList>
            <person name="Martin J."/>
            <person name="Han C."/>
            <person name="Gordon L.A."/>
            <person name="Terry A."/>
            <person name="Prabhakar S."/>
            <person name="She X."/>
            <person name="Xie G."/>
            <person name="Hellsten U."/>
            <person name="Chan Y.M."/>
            <person name="Altherr M."/>
            <person name="Couronne O."/>
            <person name="Aerts A."/>
            <person name="Bajorek E."/>
            <person name="Black S."/>
            <person name="Blumer H."/>
            <person name="Branscomb E."/>
            <person name="Brown N.C."/>
            <person name="Bruno W.J."/>
            <person name="Buckingham J.M."/>
            <person name="Callen D.F."/>
            <person name="Campbell C.S."/>
            <person name="Campbell M.L."/>
            <person name="Campbell E.W."/>
            <person name="Caoile C."/>
            <person name="Challacombe J.F."/>
            <person name="Chasteen L.A."/>
            <person name="Chertkov O."/>
            <person name="Chi H.C."/>
            <person name="Christensen M."/>
            <person name="Clark L.M."/>
            <person name="Cohn J.D."/>
            <person name="Denys M."/>
            <person name="Detter J.C."/>
            <person name="Dickson M."/>
            <person name="Dimitrijevic-Bussod M."/>
            <person name="Escobar J."/>
            <person name="Fawcett J.J."/>
            <person name="Flowers D."/>
            <person name="Fotopulos D."/>
            <person name="Glavina T."/>
            <person name="Gomez M."/>
            <person name="Gonzales E."/>
            <person name="Goodstein D."/>
            <person name="Goodwin L.A."/>
            <person name="Grady D.L."/>
            <person name="Grigoriev I."/>
            <person name="Groza M."/>
            <person name="Hammon N."/>
            <person name="Hawkins T."/>
            <person name="Haydu L."/>
            <person name="Hildebrand C.E."/>
            <person name="Huang W."/>
            <person name="Israni S."/>
            <person name="Jett J."/>
            <person name="Jewett P.B."/>
            <person name="Kadner K."/>
            <person name="Kimball H."/>
            <person name="Kobayashi A."/>
            <person name="Krawczyk M.-C."/>
            <person name="Leyba T."/>
            <person name="Longmire J.L."/>
            <person name="Lopez F."/>
            <person name="Lou Y."/>
            <person name="Lowry S."/>
            <person name="Ludeman T."/>
            <person name="Manohar C.F."/>
            <person name="Mark G.A."/>
            <person name="McMurray K.L."/>
            <person name="Meincke L.J."/>
            <person name="Morgan J."/>
            <person name="Moyzis R.K."/>
            <person name="Mundt M.O."/>
            <person name="Munk A.C."/>
            <person name="Nandkeshwar R.D."/>
            <person name="Pitluck S."/>
            <person name="Pollard M."/>
            <person name="Predki P."/>
            <person name="Parson-Quintana B."/>
            <person name="Ramirez L."/>
            <person name="Rash S."/>
            <person name="Retterer J."/>
            <person name="Ricke D.O."/>
            <person name="Robinson D.L."/>
            <person name="Rodriguez A."/>
            <person name="Salamov A."/>
            <person name="Saunders E.H."/>
            <person name="Scott D."/>
            <person name="Shough T."/>
            <person name="Stallings R.L."/>
            <person name="Stalvey M."/>
            <person name="Sutherland R.D."/>
            <person name="Tapia R."/>
            <person name="Tesmer J.G."/>
            <person name="Thayer N."/>
            <person name="Thompson L.S."/>
            <person name="Tice H."/>
            <person name="Torney D.C."/>
            <person name="Tran-Gyamfi M."/>
            <person name="Tsai M."/>
            <person name="Ulanovsky L.E."/>
            <person name="Ustaszewska A."/>
            <person name="Vo N."/>
            <person name="White P.S."/>
            <person name="Williams A.L."/>
            <person name="Wills P.L."/>
            <person name="Wu J.-R."/>
            <person name="Wu K."/>
            <person name="Yang J."/>
            <person name="DeJong P."/>
            <person name="Bruce D."/>
            <person name="Doggett N.A."/>
            <person name="Deaven L."/>
            <person name="Schmutz J."/>
            <person name="Grimwood J."/>
            <person name="Richardson P."/>
            <person name="Rokhsar D.S."/>
            <person name="Eichler E.E."/>
            <person name="Gilna P."/>
            <person name="Lucas S.M."/>
            <person name="Myers R.M."/>
            <person name="Rubin E.M."/>
            <person name="Pennacchio L.A."/>
        </authorList>
    </citation>
    <scope>NUCLEOTIDE SEQUENCE [LARGE SCALE GENOMIC DNA]</scope>
</reference>
<reference key="5">
    <citation type="journal article" date="2004" name="Genome Res.">
        <title>The status, quality, and expansion of the NIH full-length cDNA project: the Mammalian Gene Collection (MGC).</title>
        <authorList>
            <consortium name="The MGC Project Team"/>
        </authorList>
    </citation>
    <scope>NUCLEOTIDE SEQUENCE [LARGE SCALE MRNA] (ISOFORMS 1 AND 2)</scope>
    <scope>VARIANT TYR-75</scope>
    <source>
        <tissue>Brain</tissue>
        <tissue>Colon</tissue>
        <tissue>Lung</tissue>
        <tissue>Muscle</tissue>
        <tissue>Placenta</tissue>
    </source>
</reference>
<reference key="6">
    <citation type="journal article" date="2002" name="J. Immunol.">
        <title>Large scale identification of human hepatocellular carcinoma-associated antigens by autoantibodies.</title>
        <authorList>
            <person name="Wang Y."/>
            <person name="Han K.-J."/>
            <person name="Pang X.-W."/>
            <person name="Vaughan H.A."/>
            <person name="Qu W."/>
            <person name="Dong X.-Y."/>
            <person name="Peng J.-R."/>
            <person name="Zhao H.-T."/>
            <person name="Rui J.-A."/>
            <person name="Leng X.-S."/>
            <person name="Cebon J."/>
            <person name="Burgess A.W."/>
            <person name="Chen W.-F."/>
        </authorList>
    </citation>
    <scope>NUCLEOTIDE SEQUENCE [MRNA] OF 3-480 (ISOFORM 2)</scope>
    <scope>VARIANT TYR-75</scope>
    <source>
        <tissue>Hepatoma</tissue>
    </source>
</reference>
<reference key="7">
    <citation type="journal article" date="1999" name="Proc. Natl. Acad. Sci. U.S.A.">
        <title>TID1, a human homolog of the Drosophila tumor suppressor l(2)tid, encodes two mitochondrial modulators of apoptosis with opposing functions.</title>
        <authorList>
            <person name="Syken J."/>
            <person name="De-Medina T."/>
            <person name="Muenger K."/>
        </authorList>
    </citation>
    <scope>CHARACTERIZATION</scope>
    <scope>MUTAGENESIS OF HIS-121</scope>
</reference>
<reference key="8">
    <citation type="journal article" date="2003" name="J. Biol. Chem.">
        <title>Understanding human cancer using Drosophila: Tid47, a cytosolic product of the DnaJ-like tumor suppressor gene l2Tid, is a novel molecular partner of patched related to skin cancer.</title>
        <authorList>
            <person name="Canamasas I."/>
            <person name="Debes A."/>
            <person name="Natali P.G."/>
            <person name="Kurzik-Dumke U."/>
        </authorList>
    </citation>
    <scope>TISSUE SPECIFICITY</scope>
</reference>
<reference key="9">
    <citation type="journal article" date="2011" name="BMC Syst. Biol.">
        <title>Initial characterization of the human central proteome.</title>
        <authorList>
            <person name="Burkard T.R."/>
            <person name="Planyavsky M."/>
            <person name="Kaupe I."/>
            <person name="Breitwieser F.P."/>
            <person name="Buerckstuemmer T."/>
            <person name="Bennett K.L."/>
            <person name="Superti-Furga G."/>
            <person name="Colinge J."/>
        </authorList>
    </citation>
    <scope>IDENTIFICATION BY MASS SPECTROMETRY [LARGE SCALE ANALYSIS]</scope>
</reference>
<reference key="10">
    <citation type="journal article" date="2013" name="J. Proteome Res.">
        <title>Toward a comprehensive characterization of a human cancer cell phosphoproteome.</title>
        <authorList>
            <person name="Zhou H."/>
            <person name="Di Palma S."/>
            <person name="Preisinger C."/>
            <person name="Peng M."/>
            <person name="Polat A.N."/>
            <person name="Heck A.J."/>
            <person name="Mohammed S."/>
        </authorList>
    </citation>
    <scope>PHOSPHORYLATION [LARGE SCALE ANALYSIS] AT SER-398</scope>
    <scope>IDENTIFICATION BY MASS SPECTROMETRY [LARGE SCALE ANALYSIS]</scope>
    <source>
        <tissue>Cervix carcinoma</tissue>
        <tissue>Erythroleukemia</tissue>
    </source>
</reference>
<reference key="11">
    <citation type="journal article" date="2013" name="Nat. Methods">
        <title>A Y2H-seq approach defines the human protein methyltransferase interactome.</title>
        <authorList>
            <person name="Weimann M."/>
            <person name="Grossmann A."/>
            <person name="Woodsmith J."/>
            <person name="Ozkan Z."/>
            <person name="Birth P."/>
            <person name="Meierhofer D."/>
            <person name="Benlasfer N."/>
            <person name="Valovka T."/>
            <person name="Timmermann B."/>
            <person name="Wanker E.E."/>
            <person name="Sauer S."/>
            <person name="Stelzl U."/>
        </authorList>
    </citation>
    <scope>METHYLATION AT ARG-58; ARG-238 AND ARG-293 BY CARM1</scope>
    <scope>IDENTIFICATION BY MASS SPECTROMETRY</scope>
</reference>
<reference key="12">
    <citation type="journal article" date="2015" name="Proteomics">
        <title>N-terminome analysis of the human mitochondrial proteome.</title>
        <authorList>
            <person name="Vaca Jacome A.S."/>
            <person name="Rabilloud T."/>
            <person name="Schaeffer-Reiss C."/>
            <person name="Rompais M."/>
            <person name="Ayoub D."/>
            <person name="Lane L."/>
            <person name="Bairoch A."/>
            <person name="Van Dorsselaer A."/>
            <person name="Carapito C."/>
        </authorList>
    </citation>
    <scope>IDENTIFICATION BY MASS SPECTROMETRY [LARGE SCALE ANALYSIS]</scope>
</reference>
<reference key="13">
    <citation type="submission" date="2006-10" db="PDB data bank">
        <title>Solution structure of J-domain and of zinc finger domain from human DnaJ subfamily A member 3.</title>
        <authorList>
            <consortium name="RIKEN structural genomics initiative (RSGI)"/>
        </authorList>
    </citation>
    <scope>STRUCTURE BY NMR OF 93-303 IN COMPLEX WITH ZINC IONS</scope>
</reference>
<accession>Q96EY1</accession>
<accession>B2RAJ5</accession>
<accession>B4DI33</accession>
<accession>E7ES32</accession>
<accession>O75472</accession>
<accession>Q8WUJ6</accession>
<accession>Q8WXJ3</accession>
<accession>Q96D76</accession>
<accession>Q96IV1</accession>
<accession>Q9NYH8</accession>
<organism>
    <name type="scientific">Homo sapiens</name>
    <name type="common">Human</name>
    <dbReference type="NCBI Taxonomy" id="9606"/>
    <lineage>
        <taxon>Eukaryota</taxon>
        <taxon>Metazoa</taxon>
        <taxon>Chordata</taxon>
        <taxon>Craniata</taxon>
        <taxon>Vertebrata</taxon>
        <taxon>Euteleostomi</taxon>
        <taxon>Mammalia</taxon>
        <taxon>Eutheria</taxon>
        <taxon>Euarchontoglires</taxon>
        <taxon>Primates</taxon>
        <taxon>Haplorrhini</taxon>
        <taxon>Catarrhini</taxon>
        <taxon>Hominidae</taxon>
        <taxon>Homo</taxon>
    </lineage>
</organism>
<proteinExistence type="evidence at protein level"/>
<feature type="transit peptide" description="Mitochondrion" evidence="3">
    <location>
        <begin position="1"/>
        <end status="unknown"/>
    </location>
</feature>
<feature type="chain" id="PRO_0000007256" description="DnaJ homolog subfamily A member 3, mitochondrial">
    <location>
        <begin status="unknown"/>
        <end position="480"/>
    </location>
</feature>
<feature type="domain" description="J">
    <location>
        <begin position="93"/>
        <end position="158"/>
    </location>
</feature>
<feature type="repeat" description="CXXCXGXG motif">
    <location>
        <begin position="236"/>
        <end position="243"/>
    </location>
</feature>
<feature type="repeat" description="CXXCXGXG motif">
    <location>
        <begin position="253"/>
        <end position="260"/>
    </location>
</feature>
<feature type="repeat" description="CXXCXGXG motif">
    <location>
        <begin position="275"/>
        <end position="282"/>
    </location>
</feature>
<feature type="repeat" description="CXXCXGXG motif">
    <location>
        <begin position="289"/>
        <end position="296"/>
    </location>
</feature>
<feature type="zinc finger region" description="CR-type">
    <location>
        <begin position="223"/>
        <end position="301"/>
    </location>
</feature>
<feature type="region of interest" description="Disordered" evidence="4">
    <location>
        <begin position="443"/>
        <end position="471"/>
    </location>
</feature>
<feature type="compositionally biased region" description="Polar residues" evidence="4">
    <location>
        <begin position="443"/>
        <end position="456"/>
    </location>
</feature>
<feature type="binding site" evidence="13 19">
    <location>
        <position position="236"/>
    </location>
    <ligand>
        <name>Zn(2+)</name>
        <dbReference type="ChEBI" id="CHEBI:29105"/>
        <label>1</label>
    </ligand>
</feature>
<feature type="binding site" evidence="13 19">
    <location>
        <position position="239"/>
    </location>
    <ligand>
        <name>Zn(2+)</name>
        <dbReference type="ChEBI" id="CHEBI:29105"/>
        <label>1</label>
    </ligand>
</feature>
<feature type="binding site" evidence="13 19">
    <location>
        <position position="253"/>
    </location>
    <ligand>
        <name>Zn(2+)</name>
        <dbReference type="ChEBI" id="CHEBI:29105"/>
        <label>2</label>
    </ligand>
</feature>
<feature type="binding site" evidence="13 19">
    <location>
        <position position="256"/>
    </location>
    <ligand>
        <name>Zn(2+)</name>
        <dbReference type="ChEBI" id="CHEBI:29105"/>
        <label>2</label>
    </ligand>
</feature>
<feature type="binding site" evidence="13 19">
    <location>
        <position position="275"/>
    </location>
    <ligand>
        <name>Zn(2+)</name>
        <dbReference type="ChEBI" id="CHEBI:29105"/>
        <label>2</label>
    </ligand>
</feature>
<feature type="binding site" evidence="13 19">
    <location>
        <position position="278"/>
    </location>
    <ligand>
        <name>Zn(2+)</name>
        <dbReference type="ChEBI" id="CHEBI:29105"/>
        <label>2</label>
    </ligand>
</feature>
<feature type="binding site" evidence="13 19">
    <location>
        <position position="289"/>
    </location>
    <ligand>
        <name>Zn(2+)</name>
        <dbReference type="ChEBI" id="CHEBI:29105"/>
        <label>1</label>
    </ligand>
</feature>
<feature type="binding site" evidence="13 19">
    <location>
        <position position="292"/>
    </location>
    <ligand>
        <name>Zn(2+)</name>
        <dbReference type="ChEBI" id="CHEBI:29105"/>
        <label>1</label>
    </ligand>
</feature>
<feature type="modified residue" description="Omega-N-methylarginine; by CARM1" evidence="11">
    <location>
        <position position="58"/>
    </location>
</feature>
<feature type="modified residue" description="N6-acetyllysine" evidence="2">
    <location>
        <position position="134"/>
    </location>
</feature>
<feature type="modified residue" description="Omega-N-methylarginine; by CARM1" evidence="11">
    <location>
        <position position="238"/>
    </location>
</feature>
<feature type="modified residue" description="Omega-N-methylarginine; by CARM1" evidence="11">
    <location>
        <position position="293"/>
    </location>
</feature>
<feature type="modified residue" description="Phosphoserine" evidence="20">
    <location>
        <position position="398"/>
    </location>
</feature>
<feature type="splice variant" id="VSP_055728" description="In isoform 3." evidence="16">
    <original>ARCSTRWLLVVVGTPRLPAISGRGARPPREGVVGAWLSRKLSVPAFASSLTSCGPRALLTLRPGVSLTGTKHNPFICTASFHTSAPLAKEDYYQILGVPRNASQKEIKKAYYQLAKKYHPDTNKDDPKAKEKFSQLAEAYEVLSDEVKRKQYDAYGSAGFDPGASGSQHSYWKGGPTVDPEELF</original>
    <variation>EPQAERPRLCVFPDLLRPPSAADIETWCQPY</variation>
    <location>
        <begin position="3"/>
        <end position="186"/>
    </location>
</feature>
<feature type="splice variant" id="VSP_007425" description="In isoform 2 and isoform 3." evidence="14 15 16 17">
    <original>GSTMDS</original>
    <variation>KRSTGN</variation>
    <location>
        <begin position="448"/>
        <end position="453"/>
    </location>
</feature>
<feature type="splice variant" id="VSP_007426" description="In isoform 2 and isoform 3." evidence="14 15 16 17">
    <location>
        <begin position="454"/>
        <end position="480"/>
    </location>
</feature>
<feature type="sequence variant" id="VAR_027965" description="In dbSNP:rs1139653." evidence="6 7 9 10">
    <original>N</original>
    <variation>Y</variation>
    <location>
        <position position="75"/>
    </location>
</feature>
<feature type="mutagenesis site" description="Loss of modulation of apoptosis." evidence="5">
    <original>H</original>
    <variation>Q</variation>
    <location>
        <position position="121"/>
    </location>
</feature>
<feature type="sequence conflict" description="In Ref. 6; AAF66245." evidence="18" ref="6">
    <original>M</original>
    <variation>W</variation>
    <location>
        <position position="320"/>
    </location>
</feature>
<feature type="helix" evidence="22">
    <location>
        <begin position="94"/>
        <end position="98"/>
    </location>
</feature>
<feature type="helix" evidence="22">
    <location>
        <begin position="106"/>
        <end position="119"/>
    </location>
</feature>
<feature type="turn" evidence="22">
    <location>
        <begin position="122"/>
        <end position="124"/>
    </location>
</feature>
<feature type="helix" evidence="23">
    <location>
        <begin position="125"/>
        <end position="127"/>
    </location>
</feature>
<feature type="helix" evidence="22">
    <location>
        <begin position="131"/>
        <end position="146"/>
    </location>
</feature>
<feature type="helix" evidence="22">
    <location>
        <begin position="148"/>
        <end position="156"/>
    </location>
</feature>
<feature type="strand" evidence="21">
    <location>
        <begin position="222"/>
        <end position="224"/>
    </location>
</feature>
<feature type="strand" evidence="21">
    <location>
        <begin position="237"/>
        <end position="244"/>
    </location>
</feature>
<feature type="strand" evidence="21">
    <location>
        <begin position="254"/>
        <end position="259"/>
    </location>
</feature>
<feature type="strand" evidence="21">
    <location>
        <begin position="261"/>
        <end position="266"/>
    </location>
</feature>
<feature type="strand" evidence="21">
    <location>
        <begin position="269"/>
        <end position="274"/>
    </location>
</feature>
<feature type="strand" evidence="21">
    <location>
        <begin position="276"/>
        <end position="284"/>
    </location>
</feature>
<feature type="strand" evidence="21">
    <location>
        <begin position="290"/>
        <end position="294"/>
    </location>
</feature>
<feature type="strand" evidence="21">
    <location>
        <begin position="296"/>
        <end position="298"/>
    </location>
</feature>
<feature type="sequence conflict" description="In Ref. 3; BAG58345." evidence="18" ref="3">
    <original>Y</original>
    <variation>H</variation>
    <location sequence="Q96EY1-3">
        <position position="33"/>
    </location>
</feature>
<sequence length="480" mass="52489">MAARCSTRWLLVVVGTPRLPAISGRGARPPREGVVGAWLSRKLSVPAFASSLTSCGPRALLTLRPGVSLTGTKHNPFICTASFHTSAPLAKEDYYQILGVPRNASQKEIKKAYYQLAKKYHPDTNKDDPKAKEKFSQLAEAYEVLSDEVKRKQYDAYGSAGFDPGASGSQHSYWKGGPTVDPEELFRKIFGEFSSSSFGDFQTVFDQPQEYFMELTFNQAAKGVNKEFTVNIMDTCERCNGKGNEPGTKVQHCHYCGGSGMETINTGPFVMRSTCRRCGGRGSIIISPCVVCRGAGQAKQKKRVMIPVPAGVEDGQTVRMPVGKREIFITFRVQKSPVFRRDGADIHSDLFISIAQALLGGTARAQGLYETINVTIPPGTQTDQKIRMGGKGIPRINSYGYGDHYIHIKIRVPKRLTSRQQSLILSYAEDETDVEGTVNGVTLTSSGGSTMDSSAGSKARREAGEDEEGFLSKLKKMFTS</sequence>
<dbReference type="EMBL" id="AF061749">
    <property type="protein sequence ID" value="AAC29066.1"/>
    <property type="molecule type" value="mRNA"/>
</dbReference>
<dbReference type="EMBL" id="AF411044">
    <property type="protein sequence ID" value="AAL35323.1"/>
    <property type="molecule type" value="mRNA"/>
</dbReference>
<dbReference type="EMBL" id="AK295391">
    <property type="protein sequence ID" value="BAG58345.1"/>
    <property type="molecule type" value="mRNA"/>
</dbReference>
<dbReference type="EMBL" id="AK314218">
    <property type="protein sequence ID" value="BAG36892.1"/>
    <property type="molecule type" value="mRNA"/>
</dbReference>
<dbReference type="EMBL" id="AC012676">
    <property type="status" value="NOT_ANNOTATED_CDS"/>
    <property type="molecule type" value="Genomic_DNA"/>
</dbReference>
<dbReference type="EMBL" id="BC007225">
    <property type="protein sequence ID" value="AAH07225.1"/>
    <property type="molecule type" value="mRNA"/>
</dbReference>
<dbReference type="EMBL" id="BC011855">
    <property type="protein sequence ID" value="AAH11855.1"/>
    <property type="molecule type" value="mRNA"/>
</dbReference>
<dbReference type="EMBL" id="BC012343">
    <property type="protein sequence ID" value="AAH12343.1"/>
    <property type="status" value="ALT_INIT"/>
    <property type="molecule type" value="mRNA"/>
</dbReference>
<dbReference type="EMBL" id="BC014062">
    <property type="protein sequence ID" value="AAH14062.1"/>
    <property type="molecule type" value="mRNA"/>
</dbReference>
<dbReference type="EMBL" id="BC020248">
    <property type="protein sequence ID" value="AAH20248.1"/>
    <property type="molecule type" value="mRNA"/>
</dbReference>
<dbReference type="EMBL" id="BC030145">
    <property type="protein sequence ID" value="AAH30145.1"/>
    <property type="molecule type" value="mRNA"/>
</dbReference>
<dbReference type="EMBL" id="BC032100">
    <property type="protein sequence ID" value="AAH32100.1"/>
    <property type="molecule type" value="mRNA"/>
</dbReference>
<dbReference type="EMBL" id="AF244136">
    <property type="protein sequence ID" value="AAF66245.1"/>
    <property type="status" value="ALT_SEQ"/>
    <property type="molecule type" value="mRNA"/>
</dbReference>
<dbReference type="CCDS" id="CCDS10515.1">
    <molecule id="Q96EY1-1"/>
</dbReference>
<dbReference type="CCDS" id="CCDS45400.1">
    <molecule id="Q96EY1-2"/>
</dbReference>
<dbReference type="CCDS" id="CCDS66930.1">
    <molecule id="Q96EY1-3"/>
</dbReference>
<dbReference type="RefSeq" id="NP_001128582.1">
    <molecule id="Q96EY1-2"/>
    <property type="nucleotide sequence ID" value="NM_001135110.3"/>
</dbReference>
<dbReference type="RefSeq" id="NP_001273445.1">
    <molecule id="Q96EY1-3"/>
    <property type="nucleotide sequence ID" value="NM_001286516.2"/>
</dbReference>
<dbReference type="RefSeq" id="NP_005138.3">
    <molecule id="Q96EY1-1"/>
    <property type="nucleotide sequence ID" value="NM_005147.5"/>
</dbReference>
<dbReference type="RefSeq" id="XP_047290831.1">
    <molecule id="Q96EY1-1"/>
    <property type="nucleotide sequence ID" value="XM_047434875.1"/>
</dbReference>
<dbReference type="RefSeq" id="XP_054170305.1">
    <molecule id="Q96EY1-1"/>
    <property type="nucleotide sequence ID" value="XM_054314330.1"/>
</dbReference>
<dbReference type="RefSeq" id="XP_054185163.1">
    <molecule id="Q96EY1-1"/>
    <property type="nucleotide sequence ID" value="XM_054329188.1"/>
</dbReference>
<dbReference type="PDB" id="2CTT">
    <property type="method" value="NMR"/>
    <property type="chains" value="A=213-303"/>
</dbReference>
<dbReference type="PDB" id="2DN9">
    <property type="method" value="NMR"/>
    <property type="chains" value="A=93-158"/>
</dbReference>
<dbReference type="PDB" id="6IWS">
    <property type="method" value="NMR"/>
    <property type="chains" value="A=89-159"/>
</dbReference>
<dbReference type="PDB" id="7X89">
    <property type="method" value="NMR"/>
    <property type="chains" value="A=89-159"/>
</dbReference>
<dbReference type="PDBsum" id="2CTT"/>
<dbReference type="PDBsum" id="2DN9"/>
<dbReference type="PDBsum" id="6IWS"/>
<dbReference type="PDBsum" id="7X89"/>
<dbReference type="SMR" id="Q96EY1"/>
<dbReference type="BioGRID" id="114547">
    <property type="interactions" value="390"/>
</dbReference>
<dbReference type="DIP" id="DIP-33870N"/>
<dbReference type="FunCoup" id="Q96EY1">
    <property type="interactions" value="1595"/>
</dbReference>
<dbReference type="IntAct" id="Q96EY1">
    <property type="interactions" value="165"/>
</dbReference>
<dbReference type="MINT" id="Q96EY1"/>
<dbReference type="STRING" id="9606.ENSP00000262375"/>
<dbReference type="GlyGen" id="Q96EY1">
    <property type="glycosylation" value="1 site, 1 O-linked glycan (1 site)"/>
</dbReference>
<dbReference type="iPTMnet" id="Q96EY1"/>
<dbReference type="MetOSite" id="Q96EY1"/>
<dbReference type="PhosphoSitePlus" id="Q96EY1"/>
<dbReference type="SwissPalm" id="Q96EY1"/>
<dbReference type="BioMuta" id="DNAJA3"/>
<dbReference type="DMDM" id="311033374"/>
<dbReference type="jPOST" id="Q96EY1"/>
<dbReference type="MassIVE" id="Q96EY1"/>
<dbReference type="PaxDb" id="9606-ENSP00000262375"/>
<dbReference type="PeptideAtlas" id="Q96EY1"/>
<dbReference type="ProteomicsDB" id="17904"/>
<dbReference type="ProteomicsDB" id="76466">
    <molecule id="Q96EY1-1"/>
</dbReference>
<dbReference type="ProteomicsDB" id="76467">
    <molecule id="Q96EY1-2"/>
</dbReference>
<dbReference type="Pumba" id="Q96EY1"/>
<dbReference type="Antibodypedia" id="24319">
    <property type="antibodies" value="270 antibodies from 33 providers"/>
</dbReference>
<dbReference type="DNASU" id="9093"/>
<dbReference type="Ensembl" id="ENST00000262375.11">
    <molecule id="Q96EY1-1"/>
    <property type="protein sequence ID" value="ENSP00000262375.4"/>
    <property type="gene ID" value="ENSG00000103423.14"/>
</dbReference>
<dbReference type="Ensembl" id="ENST00000355296.8">
    <molecule id="Q96EY1-2"/>
    <property type="protein sequence ID" value="ENSP00000347445.4"/>
    <property type="gene ID" value="ENSG00000103423.14"/>
</dbReference>
<dbReference type="Ensembl" id="ENST00000431375.6">
    <molecule id="Q96EY1-3"/>
    <property type="protein sequence ID" value="ENSP00000393970.2"/>
    <property type="gene ID" value="ENSG00000103423.14"/>
</dbReference>
<dbReference type="Ensembl" id="ENST00000612103.4">
    <molecule id="Q96EY1-1"/>
    <property type="protein sequence ID" value="ENSP00000477570.1"/>
    <property type="gene ID" value="ENSG00000276726.4"/>
</dbReference>
<dbReference type="Ensembl" id="ENST00000614397.4">
    <molecule id="Q96EY1-2"/>
    <property type="protein sequence ID" value="ENSP00000479815.1"/>
    <property type="gene ID" value="ENSG00000276726.4"/>
</dbReference>
<dbReference type="GeneID" id="9093"/>
<dbReference type="KEGG" id="hsa:9093"/>
<dbReference type="MANE-Select" id="ENST00000262375.11">
    <property type="protein sequence ID" value="ENSP00000262375.4"/>
    <property type="RefSeq nucleotide sequence ID" value="NM_005147.6"/>
    <property type="RefSeq protein sequence ID" value="NP_005138.3"/>
</dbReference>
<dbReference type="UCSC" id="uc002cwk.4">
    <molecule id="Q96EY1-1"/>
    <property type="organism name" value="human"/>
</dbReference>
<dbReference type="AGR" id="HGNC:11808"/>
<dbReference type="CTD" id="9093"/>
<dbReference type="DisGeNET" id="9093"/>
<dbReference type="GeneCards" id="DNAJA3"/>
<dbReference type="HGNC" id="HGNC:11808">
    <property type="gene designation" value="DNAJA3"/>
</dbReference>
<dbReference type="HPA" id="ENSG00000103423">
    <property type="expression patterns" value="Low tissue specificity"/>
</dbReference>
<dbReference type="MIM" id="608382">
    <property type="type" value="gene"/>
</dbReference>
<dbReference type="neXtProt" id="NX_Q96EY1"/>
<dbReference type="OpenTargets" id="ENSG00000103423"/>
<dbReference type="PharmGKB" id="PA27410"/>
<dbReference type="VEuPathDB" id="HostDB:ENSG00000103423"/>
<dbReference type="eggNOG" id="KOG0715">
    <property type="taxonomic scope" value="Eukaryota"/>
</dbReference>
<dbReference type="GeneTree" id="ENSGT00940000155280"/>
<dbReference type="HOGENOM" id="CLU_017633_0_5_1"/>
<dbReference type="InParanoid" id="Q96EY1"/>
<dbReference type="OMA" id="MATDYYA"/>
<dbReference type="OrthoDB" id="10256793at2759"/>
<dbReference type="PAN-GO" id="Q96EY1">
    <property type="GO annotations" value="4 GO annotations based on evolutionary models"/>
</dbReference>
<dbReference type="PhylomeDB" id="Q96EY1"/>
<dbReference type="TreeFam" id="TF105152"/>
<dbReference type="PathwayCommons" id="Q96EY1"/>
<dbReference type="SignaLink" id="Q96EY1"/>
<dbReference type="BioGRID-ORCS" id="9093">
    <property type="hits" value="730 hits in 1179 CRISPR screens"/>
</dbReference>
<dbReference type="CD-CODE" id="FB4E32DD">
    <property type="entry name" value="Presynaptic clusters and postsynaptic densities"/>
</dbReference>
<dbReference type="ChiTaRS" id="DNAJA3">
    <property type="organism name" value="human"/>
</dbReference>
<dbReference type="EvolutionaryTrace" id="Q96EY1"/>
<dbReference type="GeneWiki" id="DNAJA3"/>
<dbReference type="GenomeRNAi" id="9093"/>
<dbReference type="Pharos" id="Q96EY1">
    <property type="development level" value="Tbio"/>
</dbReference>
<dbReference type="PRO" id="PR:Q96EY1"/>
<dbReference type="Proteomes" id="UP000005640">
    <property type="component" value="Chromosome 16"/>
</dbReference>
<dbReference type="RNAct" id="Q96EY1">
    <property type="molecule type" value="protein"/>
</dbReference>
<dbReference type="Bgee" id="ENSG00000103423">
    <property type="expression patterns" value="Expressed in gastrocnemius and 97 other cell types or tissues"/>
</dbReference>
<dbReference type="ExpressionAtlas" id="Q96EY1">
    <property type="expression patterns" value="baseline and differential"/>
</dbReference>
<dbReference type="GO" id="GO:0005737">
    <property type="term" value="C:cytoplasm"/>
    <property type="evidence" value="ECO:0000314"/>
    <property type="project" value="UniProtKB"/>
</dbReference>
<dbReference type="GO" id="GO:0009898">
    <property type="term" value="C:cytoplasmic side of plasma membrane"/>
    <property type="evidence" value="ECO:0000250"/>
    <property type="project" value="UniProtKB"/>
</dbReference>
<dbReference type="GO" id="GO:0005829">
    <property type="term" value="C:cytosol"/>
    <property type="evidence" value="ECO:0000315"/>
    <property type="project" value="UniProtKB"/>
</dbReference>
<dbReference type="GO" id="GO:0043231">
    <property type="term" value="C:intracellular membrane-bounded organelle"/>
    <property type="evidence" value="ECO:0000314"/>
    <property type="project" value="HPA"/>
</dbReference>
<dbReference type="GO" id="GO:0005759">
    <property type="term" value="C:mitochondrial matrix"/>
    <property type="evidence" value="ECO:0000314"/>
    <property type="project" value="UniProtKB"/>
</dbReference>
<dbReference type="GO" id="GO:0042645">
    <property type="term" value="C:mitochondrial nucleoid"/>
    <property type="evidence" value="ECO:0000314"/>
    <property type="project" value="UniProtKB"/>
</dbReference>
<dbReference type="GO" id="GO:0005739">
    <property type="term" value="C:mitochondrion"/>
    <property type="evidence" value="ECO:0000314"/>
    <property type="project" value="HPA"/>
</dbReference>
<dbReference type="GO" id="GO:0031594">
    <property type="term" value="C:neuromuscular junction"/>
    <property type="evidence" value="ECO:0000250"/>
    <property type="project" value="UniProtKB"/>
</dbReference>
<dbReference type="GO" id="GO:0005634">
    <property type="term" value="C:nucleus"/>
    <property type="evidence" value="ECO:0000314"/>
    <property type="project" value="UniProtKB"/>
</dbReference>
<dbReference type="GO" id="GO:0045211">
    <property type="term" value="C:postsynaptic membrane"/>
    <property type="evidence" value="ECO:0000250"/>
    <property type="project" value="UniProtKB"/>
</dbReference>
<dbReference type="GO" id="GO:0005524">
    <property type="term" value="F:ATP binding"/>
    <property type="evidence" value="ECO:0007669"/>
    <property type="project" value="InterPro"/>
</dbReference>
<dbReference type="GO" id="GO:0140297">
    <property type="term" value="F:DNA-binding transcription factor binding"/>
    <property type="evidence" value="ECO:0000353"/>
    <property type="project" value="UniProtKB"/>
</dbReference>
<dbReference type="GO" id="GO:0030695">
    <property type="term" value="F:GTPase regulator activity"/>
    <property type="evidence" value="ECO:0007669"/>
    <property type="project" value="Ensembl"/>
</dbReference>
<dbReference type="GO" id="GO:0030544">
    <property type="term" value="F:Hsp70 protein binding"/>
    <property type="evidence" value="ECO:0007669"/>
    <property type="project" value="Ensembl"/>
</dbReference>
<dbReference type="GO" id="GO:0106137">
    <property type="term" value="F:IkappaB kinase complex binding"/>
    <property type="evidence" value="ECO:0000314"/>
    <property type="project" value="UniProtKB"/>
</dbReference>
<dbReference type="GO" id="GO:0051059">
    <property type="term" value="F:NF-kappaB binding"/>
    <property type="evidence" value="ECO:0000353"/>
    <property type="project" value="UniProtKB"/>
</dbReference>
<dbReference type="GO" id="GO:0019901">
    <property type="term" value="F:protein kinase binding"/>
    <property type="evidence" value="ECO:0000353"/>
    <property type="project" value="UniProtKB"/>
</dbReference>
<dbReference type="GO" id="GO:0044877">
    <property type="term" value="F:protein-containing complex binding"/>
    <property type="evidence" value="ECO:0000314"/>
    <property type="project" value="UniProtKB"/>
</dbReference>
<dbReference type="GO" id="GO:0061629">
    <property type="term" value="F:RNA polymerase II-specific DNA-binding transcription factor binding"/>
    <property type="evidence" value="ECO:0000353"/>
    <property type="project" value="UniProtKB"/>
</dbReference>
<dbReference type="GO" id="GO:0005133">
    <property type="term" value="F:type II interferon receptor binding"/>
    <property type="evidence" value="ECO:0000314"/>
    <property type="project" value="UniProtKB"/>
</dbReference>
<dbReference type="GO" id="GO:0051082">
    <property type="term" value="F:unfolded protein binding"/>
    <property type="evidence" value="ECO:0007669"/>
    <property type="project" value="Ensembl"/>
</dbReference>
<dbReference type="GO" id="GO:0008270">
    <property type="term" value="F:zinc ion binding"/>
    <property type="evidence" value="ECO:0007669"/>
    <property type="project" value="UniProtKB-KW"/>
</dbReference>
<dbReference type="GO" id="GO:0006924">
    <property type="term" value="P:activation-induced cell death of T cells"/>
    <property type="evidence" value="ECO:0007669"/>
    <property type="project" value="Ensembl"/>
</dbReference>
<dbReference type="GO" id="GO:0090398">
    <property type="term" value="P:cellular senescence"/>
    <property type="evidence" value="ECO:0007669"/>
    <property type="project" value="Ensembl"/>
</dbReference>
<dbReference type="GO" id="GO:0006264">
    <property type="term" value="P:mitochondrial DNA replication"/>
    <property type="evidence" value="ECO:0007669"/>
    <property type="project" value="Ensembl"/>
</dbReference>
<dbReference type="GO" id="GO:0007005">
    <property type="term" value="P:mitochondrion organization"/>
    <property type="evidence" value="ECO:0000318"/>
    <property type="project" value="GO_Central"/>
</dbReference>
<dbReference type="GO" id="GO:0043066">
    <property type="term" value="P:negative regulation of apoptotic process"/>
    <property type="evidence" value="ECO:0000314"/>
    <property type="project" value="UniProtKB"/>
</dbReference>
<dbReference type="GO" id="GO:0043124">
    <property type="term" value="P:negative regulation of canonical NF-kappaB signal transduction"/>
    <property type="evidence" value="ECO:0000314"/>
    <property type="project" value="UniProtKB"/>
</dbReference>
<dbReference type="GO" id="GO:0008285">
    <property type="term" value="P:negative regulation of cell population proliferation"/>
    <property type="evidence" value="ECO:0000314"/>
    <property type="project" value="UniProtKB"/>
</dbReference>
<dbReference type="GO" id="GO:0043069">
    <property type="term" value="P:negative regulation of programmed cell death"/>
    <property type="evidence" value="ECO:0007669"/>
    <property type="project" value="Ensembl"/>
</dbReference>
<dbReference type="GO" id="GO:0000122">
    <property type="term" value="P:negative regulation of transcription by RNA polymerase II"/>
    <property type="evidence" value="ECO:0000314"/>
    <property type="project" value="UniProtKB"/>
</dbReference>
<dbReference type="GO" id="GO:0060336">
    <property type="term" value="P:negative regulation of type II interferon-mediated signaling pathway"/>
    <property type="evidence" value="ECO:0000314"/>
    <property type="project" value="UniProtKB"/>
</dbReference>
<dbReference type="GO" id="GO:0007528">
    <property type="term" value="P:neuromuscular junction development"/>
    <property type="evidence" value="ECO:0000314"/>
    <property type="project" value="UniProtKB"/>
</dbReference>
<dbReference type="GO" id="GO:0043065">
    <property type="term" value="P:positive regulation of apoptotic process"/>
    <property type="evidence" value="ECO:0000314"/>
    <property type="project" value="UniProtKB"/>
</dbReference>
<dbReference type="GO" id="GO:0031398">
    <property type="term" value="P:positive regulation of protein ubiquitination"/>
    <property type="evidence" value="ECO:0000314"/>
    <property type="project" value="UniProtKB"/>
</dbReference>
<dbReference type="GO" id="GO:0042102">
    <property type="term" value="P:positive regulation of T cell proliferation"/>
    <property type="evidence" value="ECO:0007669"/>
    <property type="project" value="Ensembl"/>
</dbReference>
<dbReference type="GO" id="GO:0006457">
    <property type="term" value="P:protein folding"/>
    <property type="evidence" value="ECO:0000314"/>
    <property type="project" value="UniProtKB"/>
</dbReference>
<dbReference type="GO" id="GO:0050821">
    <property type="term" value="P:protein stabilization"/>
    <property type="evidence" value="ECO:0000314"/>
    <property type="project" value="UniProtKB"/>
</dbReference>
<dbReference type="GO" id="GO:0009408">
    <property type="term" value="P:response to heat"/>
    <property type="evidence" value="ECO:0007669"/>
    <property type="project" value="InterPro"/>
</dbReference>
<dbReference type="GO" id="GO:0034341">
    <property type="term" value="P:response to type II interferon"/>
    <property type="evidence" value="ECO:0000314"/>
    <property type="project" value="UniProtKB"/>
</dbReference>
<dbReference type="GO" id="GO:0071340">
    <property type="term" value="P:skeletal muscle acetylcholine-gated channel clustering"/>
    <property type="evidence" value="ECO:0000250"/>
    <property type="project" value="UniProtKB"/>
</dbReference>
<dbReference type="GO" id="GO:0007264">
    <property type="term" value="P:small GTPase-mediated signal transduction"/>
    <property type="evidence" value="ECO:0007669"/>
    <property type="project" value="Ensembl"/>
</dbReference>
<dbReference type="GO" id="GO:0033077">
    <property type="term" value="P:T cell differentiation in thymus"/>
    <property type="evidence" value="ECO:0007669"/>
    <property type="project" value="Ensembl"/>
</dbReference>
<dbReference type="CDD" id="cd06257">
    <property type="entry name" value="DnaJ"/>
    <property type="match status" value="1"/>
</dbReference>
<dbReference type="CDD" id="cd10747">
    <property type="entry name" value="DnaJ_C"/>
    <property type="match status" value="1"/>
</dbReference>
<dbReference type="CDD" id="cd10719">
    <property type="entry name" value="DnaJ_zf"/>
    <property type="match status" value="1"/>
</dbReference>
<dbReference type="FunFam" id="2.60.260.20:FF:000005">
    <property type="entry name" value="Chaperone protein dnaJ 1, mitochondrial"/>
    <property type="match status" value="1"/>
</dbReference>
<dbReference type="FunFam" id="2.10.230.10:FF:000003">
    <property type="entry name" value="dnaJ homolog subfamily A member 3, mitochondrial"/>
    <property type="match status" value="1"/>
</dbReference>
<dbReference type="FunFam" id="1.10.287.110:FF:000025">
    <property type="entry name" value="dnaJ homolog subfamily A member 3, mitochondrial isoform X2"/>
    <property type="match status" value="1"/>
</dbReference>
<dbReference type="Gene3D" id="1.10.287.110">
    <property type="entry name" value="DnaJ domain"/>
    <property type="match status" value="1"/>
</dbReference>
<dbReference type="Gene3D" id="2.10.230.10">
    <property type="entry name" value="Heat shock protein DnaJ, cysteine-rich domain"/>
    <property type="match status" value="1"/>
</dbReference>
<dbReference type="Gene3D" id="2.60.260.20">
    <property type="entry name" value="Urease metallochaperone UreE, N-terminal domain"/>
    <property type="match status" value="2"/>
</dbReference>
<dbReference type="HAMAP" id="MF_01152">
    <property type="entry name" value="DnaJ"/>
    <property type="match status" value="1"/>
</dbReference>
<dbReference type="InterPro" id="IPR051938">
    <property type="entry name" value="Apopto_cytoskel_mod"/>
</dbReference>
<dbReference type="InterPro" id="IPR012724">
    <property type="entry name" value="DnaJ"/>
</dbReference>
<dbReference type="InterPro" id="IPR002939">
    <property type="entry name" value="DnaJ_C"/>
</dbReference>
<dbReference type="InterPro" id="IPR001623">
    <property type="entry name" value="DnaJ_domain"/>
</dbReference>
<dbReference type="InterPro" id="IPR018253">
    <property type="entry name" value="DnaJ_domain_CS"/>
</dbReference>
<dbReference type="InterPro" id="IPR008971">
    <property type="entry name" value="HSP40/DnaJ_pept-bd"/>
</dbReference>
<dbReference type="InterPro" id="IPR001305">
    <property type="entry name" value="HSP_DnaJ_Cys-rich_dom"/>
</dbReference>
<dbReference type="InterPro" id="IPR036410">
    <property type="entry name" value="HSP_DnaJ_Cys-rich_dom_sf"/>
</dbReference>
<dbReference type="InterPro" id="IPR036869">
    <property type="entry name" value="J_dom_sf"/>
</dbReference>
<dbReference type="PANTHER" id="PTHR44145">
    <property type="entry name" value="DNAJ HOMOLOG SUBFAMILY A MEMBER 3, MITOCHONDRIAL"/>
    <property type="match status" value="1"/>
</dbReference>
<dbReference type="PANTHER" id="PTHR44145:SF3">
    <property type="entry name" value="DNAJ HOMOLOG SUBFAMILY A MEMBER 3, MITOCHONDRIAL"/>
    <property type="match status" value="1"/>
</dbReference>
<dbReference type="Pfam" id="PF00226">
    <property type="entry name" value="DnaJ"/>
    <property type="match status" value="1"/>
</dbReference>
<dbReference type="Pfam" id="PF01556">
    <property type="entry name" value="DnaJ_C"/>
    <property type="match status" value="1"/>
</dbReference>
<dbReference type="Pfam" id="PF00684">
    <property type="entry name" value="DnaJ_CXXCXGXG"/>
    <property type="match status" value="1"/>
</dbReference>
<dbReference type="PRINTS" id="PR00625">
    <property type="entry name" value="JDOMAIN"/>
</dbReference>
<dbReference type="SMART" id="SM00271">
    <property type="entry name" value="DnaJ"/>
    <property type="match status" value="1"/>
</dbReference>
<dbReference type="SUPFAM" id="SSF46565">
    <property type="entry name" value="Chaperone J-domain"/>
    <property type="match status" value="1"/>
</dbReference>
<dbReference type="SUPFAM" id="SSF57938">
    <property type="entry name" value="DnaJ/Hsp40 cysteine-rich domain"/>
    <property type="match status" value="1"/>
</dbReference>
<dbReference type="SUPFAM" id="SSF49493">
    <property type="entry name" value="HSP40/DnaJ peptide-binding domain"/>
    <property type="match status" value="1"/>
</dbReference>
<dbReference type="PROSITE" id="PS00636">
    <property type="entry name" value="DNAJ_1"/>
    <property type="match status" value="1"/>
</dbReference>
<dbReference type="PROSITE" id="PS50076">
    <property type="entry name" value="DNAJ_2"/>
    <property type="match status" value="1"/>
</dbReference>
<dbReference type="PROSITE" id="PS51188">
    <property type="entry name" value="ZF_CR"/>
    <property type="match status" value="1"/>
</dbReference>
<protein>
    <recommendedName>
        <fullName>DnaJ homolog subfamily A member 3, mitochondrial</fullName>
    </recommendedName>
    <alternativeName>
        <fullName>DnaJ protein Tid-1</fullName>
        <shortName>hTid-1</shortName>
    </alternativeName>
    <alternativeName>
        <fullName>Hepatocellular carcinoma-associated antigen 57</fullName>
    </alternativeName>
    <alternativeName>
        <fullName>Tumorous imaginal discs protein Tid56 homolog</fullName>
    </alternativeName>
</protein>
<comment type="function">
    <text>Modulates apoptotic signal transduction or effector structures within the mitochondrial matrix. Affect cytochrome C release from the mitochondria and caspase 3 activation, but not caspase 8 activation. Isoform 1 increases apoptosis triggered by both TNF and the DNA-damaging agent mytomycin C; in sharp contrast, isoform 2 suppresses apoptosis. Can modulate IFN-gamma-mediated transcriptional activity. Isoform 2 may play a role in neuromuscular junction development as an effector of the MUSK signaling pathway.</text>
</comment>
<comment type="subunit">
    <text evidence="1">Interacts with JAK2, HSPA9B and IFN-gammaR2 chain. Interacts with Ras GTPase-activating protein 1 (RASA1). Isoform 2 interacts with MUSK (via the cytoplasmic domain) (By similarity).</text>
</comment>
<comment type="interaction">
    <interactant intactId="EBI-356767">
        <id>Q96EY1</id>
    </interactant>
    <interactant intactId="EBI-930964">
        <id>P54253</id>
        <label>ATXN1</label>
    </interactant>
    <organismsDiffer>false</organismsDiffer>
    <experiments>7</experiments>
</comment>
<comment type="interaction">
    <interactant intactId="EBI-356767">
        <id>Q96EY1</id>
    </interactant>
    <interactant intactId="EBI-2339854">
        <id>Q86X55</id>
        <label>CARM1</label>
    </interactant>
    <organismsDiffer>false</organismsDiffer>
    <experiments>2</experiments>
</comment>
<comment type="interaction">
    <interactant intactId="EBI-356767">
        <id>Q96EY1</id>
    </interactant>
    <interactant intactId="EBI-7062247">
        <id>Q9UHD4</id>
        <label>CIDEB</label>
    </interactant>
    <organismsDiffer>false</organismsDiffer>
    <experiments>3</experiments>
</comment>
<comment type="interaction">
    <interactant intactId="EBI-356767">
        <id>Q96EY1</id>
    </interactant>
    <interactant intactId="EBI-3867333">
        <id>A8MQ03</id>
        <label>CYSRT1</label>
    </interactant>
    <organismsDiffer>false</organismsDiffer>
    <experiments>3</experiments>
</comment>
<comment type="interaction">
    <interactant intactId="EBI-356767">
        <id>Q96EY1</id>
    </interactant>
    <interactant intactId="EBI-466029">
        <id>P42858</id>
        <label>HTT</label>
    </interactant>
    <organismsDiffer>false</organismsDiffer>
    <experiments>5</experiments>
</comment>
<comment type="interaction">
    <interactant intactId="EBI-356767">
        <id>Q96EY1</id>
    </interactant>
    <interactant intactId="EBI-710124">
        <id>O60341</id>
        <label>KDM1A</label>
    </interactant>
    <organismsDiffer>false</organismsDiffer>
    <experiments>2</experiments>
</comment>
<comment type="interaction">
    <interactant intactId="EBI-356767">
        <id>Q96EY1</id>
    </interactant>
    <interactant intactId="EBI-1039152">
        <id>P08581</id>
        <label>MET</label>
    </interactant>
    <organismsDiffer>false</organismsDiffer>
    <experiments>4</experiments>
</comment>
<comment type="interaction">
    <interactant intactId="EBI-356767">
        <id>Q96EY1</id>
    </interactant>
    <interactant intactId="EBI-912440">
        <id>Q96LA8</id>
        <label>PRMT6</label>
    </interactant>
    <organismsDiffer>false</organismsDiffer>
    <experiments>2</experiments>
</comment>
<comment type="interaction">
    <interactant intactId="EBI-356767">
        <id>Q96EY1</id>
    </interactant>
    <interactant intactId="EBI-1186119">
        <id>P51692</id>
        <label>STAT5B</label>
    </interactant>
    <organismsDiffer>false</organismsDiffer>
    <experiments>2</experiments>
</comment>
<comment type="interaction">
    <interactant intactId="EBI-356767">
        <id>Q96EY1</id>
    </interactant>
    <interactant intactId="EBI-15619523">
        <id>Q61115</id>
        <label>Ptch1</label>
    </interactant>
    <organismsDiffer>true</organismsDiffer>
    <experiments>2</experiments>
</comment>
<comment type="interaction">
    <interactant intactId="EBI-356767">
        <id>Q96EY1</id>
    </interactant>
    <interactant intactId="EBI-617454">
        <id>P42232</id>
        <label>Stat5b</label>
    </interactant>
    <organismsDiffer>true</organismsDiffer>
    <experiments>3</experiments>
</comment>
<comment type="interaction">
    <interactant intactId="EBI-4322330">
        <id>Q96EY1-1</id>
    </interactant>
    <interactant intactId="EBI-617454">
        <id>P42232</id>
        <label>Stat5b</label>
    </interactant>
    <organismsDiffer>true</organismsDiffer>
    <experiments>2</experiments>
</comment>
<comment type="interaction">
    <interactant intactId="EBI-3952284">
        <id>Q96EY1-2</id>
    </interactant>
    <interactant intactId="EBI-745689">
        <id>Q7L5A3</id>
        <label>ATOSB</label>
    </interactant>
    <organismsDiffer>false</organismsDiffer>
    <experiments>3</experiments>
</comment>
<comment type="interaction">
    <interactant intactId="EBI-3952284">
        <id>Q96EY1-2</id>
    </interactant>
    <interactant intactId="EBI-739879">
        <id>Q53TS8</id>
        <label>C2CD6</label>
    </interactant>
    <organismsDiffer>false</organismsDiffer>
    <experiments>3</experiments>
</comment>
<comment type="interaction">
    <interactant intactId="EBI-3952284">
        <id>Q96EY1-2</id>
    </interactant>
    <interactant intactId="EBI-3893419">
        <id>P15408</id>
        <label>FOSL2</label>
    </interactant>
    <organismsDiffer>false</organismsDiffer>
    <experiments>3</experiments>
</comment>
<comment type="interaction">
    <interactant intactId="EBI-3952284">
        <id>Q96EY1-2</id>
    </interactant>
    <interactant intactId="EBI-741729">
        <id>Q96NE9</id>
        <label>FRMD6</label>
    </interactant>
    <organismsDiffer>false</organismsDiffer>
    <experiments>6</experiments>
</comment>
<comment type="interaction">
    <interactant intactId="EBI-3952284">
        <id>Q96EY1-2</id>
    </interactant>
    <interactant intactId="EBI-746252">
        <id>Q96CN9</id>
        <label>GCC1</label>
    </interactant>
    <organismsDiffer>false</organismsDiffer>
    <experiments>3</experiments>
</comment>
<comment type="interaction">
    <interactant intactId="EBI-3952284">
        <id>Q96EY1-2</id>
    </interactant>
    <interactant intactId="EBI-10236940">
        <id>Q15735</id>
        <label>INPP5J</label>
    </interactant>
    <organismsDiffer>false</organismsDiffer>
    <experiments>3</experiments>
</comment>
<comment type="interaction">
    <interactant intactId="EBI-3952284">
        <id>Q96EY1-2</id>
    </interactant>
    <interactant intactId="EBI-1039152">
        <id>P08581</id>
        <label>MET</label>
    </interactant>
    <organismsDiffer>false</organismsDiffer>
    <experiments>2</experiments>
</comment>
<comment type="interaction">
    <interactant intactId="EBI-3952284">
        <id>Q96EY1-2</id>
    </interactant>
    <interactant intactId="EBI-395927">
        <id>Q9BVI4</id>
        <label>NOC4L</label>
    </interactant>
    <organismsDiffer>false</organismsDiffer>
    <experiments>3</experiments>
</comment>
<comment type="interaction">
    <interactant intactId="EBI-3952284">
        <id>Q96EY1-2</id>
    </interactant>
    <interactant intactId="EBI-9057006">
        <id>Q9UJX0</id>
        <label>OSGIN1</label>
    </interactant>
    <organismsDiffer>false</organismsDiffer>
    <experiments>3</experiments>
</comment>
<comment type="interaction">
    <interactant intactId="EBI-3952284">
        <id>Q96EY1-2</id>
    </interactant>
    <interactant intactId="EBI-749295">
        <id>O75716</id>
        <label>STK16</label>
    </interactant>
    <organismsDiffer>false</organismsDiffer>
    <experiments>3</experiments>
</comment>
<comment type="interaction">
    <interactant intactId="EBI-3952284">
        <id>Q96EY1-2</id>
    </interactant>
    <interactant intactId="EBI-10176552">
        <id>D2IYK5</id>
        <label>TCF19</label>
    </interactant>
    <organismsDiffer>false</organismsDiffer>
    <experiments>3</experiments>
</comment>
<comment type="interaction">
    <interactant intactId="EBI-3952284">
        <id>Q96EY1-2</id>
    </interactant>
    <interactant intactId="EBI-10249899">
        <id>Q9H614</id>
    </interactant>
    <organismsDiffer>false</organismsDiffer>
    <experiments>3</experiments>
</comment>
<comment type="interaction">
    <interactant intactId="EBI-3952284">
        <id>Q96EY1-2</id>
    </interactant>
    <interactant intactId="EBI-617454">
        <id>P42232</id>
        <label>Stat5b</label>
    </interactant>
    <organismsDiffer>true</organismsDiffer>
    <experiments>2</experiments>
</comment>
<comment type="interaction">
    <interactant intactId="EBI-11526226">
        <id>Q96EY1-3</id>
    </interactant>
    <interactant intactId="EBI-930964">
        <id>P54253</id>
        <label>ATXN1</label>
    </interactant>
    <organismsDiffer>false</organismsDiffer>
    <experiments>6</experiments>
</comment>
<comment type="interaction">
    <interactant intactId="EBI-11526226">
        <id>Q96EY1-3</id>
    </interactant>
    <interactant intactId="EBI-718729">
        <id>P55212</id>
        <label>CASP6</label>
    </interactant>
    <organismsDiffer>false</organismsDiffer>
    <experiments>3</experiments>
</comment>
<comment type="interaction">
    <interactant intactId="EBI-11526226">
        <id>Q96EY1-3</id>
    </interactant>
    <interactant intactId="EBI-25852368">
        <id>O75460-2</id>
        <label>ERN1</label>
    </interactant>
    <organismsDiffer>false</organismsDiffer>
    <experiments>3</experiments>
</comment>
<comment type="interaction">
    <interactant intactId="EBI-11526226">
        <id>Q96EY1-3</id>
    </interactant>
    <interactant intactId="EBI-348399">
        <id>P22607</id>
        <label>FGFR3</label>
    </interactant>
    <organismsDiffer>false</organismsDiffer>
    <experiments>3</experiments>
</comment>
<comment type="interaction">
    <interactant intactId="EBI-11526226">
        <id>Q96EY1-3</id>
    </interactant>
    <interactant intactId="EBI-10226858">
        <id>Q0VDC6</id>
        <label>FKBP1A</label>
    </interactant>
    <organismsDiffer>false</organismsDiffer>
    <experiments>3</experiments>
</comment>
<comment type="interaction">
    <interactant intactId="EBI-11526226">
        <id>Q96EY1-3</id>
    </interactant>
    <interactant intactId="EBI-744302">
        <id>P14136</id>
        <label>GFAP</label>
    </interactant>
    <organismsDiffer>false</organismsDiffer>
    <experiments>3</experiments>
</comment>
<comment type="interaction">
    <interactant intactId="EBI-11526226">
        <id>Q96EY1-3</id>
    </interactant>
    <interactant intactId="EBI-351506">
        <id>P06396</id>
        <label>GSN</label>
    </interactant>
    <organismsDiffer>false</organismsDiffer>
    <experiments>3</experiments>
</comment>
<comment type="interaction">
    <interactant intactId="EBI-11526226">
        <id>Q96EY1-3</id>
    </interactant>
    <interactant intactId="EBI-356991">
        <id>P54652</id>
        <label>HSPA2</label>
    </interactant>
    <organismsDiffer>false</organismsDiffer>
    <experiments>3</experiments>
</comment>
<comment type="interaction">
    <interactant intactId="EBI-11526226">
        <id>Q96EY1-3</id>
    </interactant>
    <interactant intactId="EBI-1055254">
        <id>Q8WXH2</id>
        <label>JPH3</label>
    </interactant>
    <organismsDiffer>false</organismsDiffer>
    <experiments>3</experiments>
</comment>
<comment type="interaction">
    <interactant intactId="EBI-11526226">
        <id>Q96EY1-3</id>
    </interactant>
    <interactant intactId="EBI-21591415">
        <id>P13473-2</id>
        <label>LAMP2</label>
    </interactant>
    <organismsDiffer>false</organismsDiffer>
    <experiments>3</experiments>
</comment>
<comment type="interaction">
    <interactant intactId="EBI-11526226">
        <id>Q96EY1-3</id>
    </interactant>
    <interactant intactId="EBI-713665">
        <id>P19404</id>
        <label>NDUFV2</label>
    </interactant>
    <organismsDiffer>false</organismsDiffer>
    <experiments>3</experiments>
</comment>
<comment type="interaction">
    <interactant intactId="EBI-11526226">
        <id>Q96EY1-3</id>
    </interactant>
    <interactant intactId="EBI-5280197">
        <id>O75400-2</id>
        <label>PRPF40A</label>
    </interactant>
    <organismsDiffer>false</organismsDiffer>
    <experiments>3</experiments>
</comment>
<comment type="interaction">
    <interactant intactId="EBI-11526226">
        <id>Q96EY1-3</id>
    </interactant>
    <interactant intactId="EBI-286642">
        <id>P62826</id>
        <label>RAN</label>
    </interactant>
    <organismsDiffer>false</organismsDiffer>
    <experiments>3</experiments>
</comment>
<comment type="interaction">
    <interactant intactId="EBI-11526226">
        <id>Q96EY1-3</id>
    </interactant>
    <interactant intactId="EBI-372899">
        <id>Q13148</id>
        <label>TARDBP</label>
    </interactant>
    <organismsDiffer>false</organismsDiffer>
    <experiments>6</experiments>
</comment>
<comment type="interaction">
    <interactant intactId="EBI-11526226">
        <id>Q96EY1-3</id>
    </interactant>
    <interactant intactId="EBI-741480">
        <id>Q9UMX0</id>
        <label>UBQLN1</label>
    </interactant>
    <organismsDiffer>false</organismsDiffer>
    <experiments>3</experiments>
</comment>
<comment type="interaction">
    <interactant intactId="EBI-11526226">
        <id>Q96EY1-3</id>
    </interactant>
    <interactant intactId="EBI-25900580">
        <id>Q9Y649</id>
    </interactant>
    <organismsDiffer>false</organismsDiffer>
    <experiments>3</experiments>
</comment>
<comment type="subcellular location">
    <subcellularLocation>
        <location>Mitochondrion matrix</location>
    </subcellularLocation>
    <subcellularLocation>
        <location evidence="1">Cytoplasm</location>
        <location evidence="1">Cytosol</location>
    </subcellularLocation>
    <subcellularLocation>
        <location evidence="1">Postsynaptic cell membrane</location>
        <topology evidence="1">Peripheral membrane protein</topology>
    </subcellularLocation>
    <text evidence="1">Recruited to the postsynaptic cell membrane of the neuromuscular junction through interaction with MUSK.</text>
</comment>
<comment type="alternative products">
    <event type="alternative splicing"/>
    <isoform>
        <id>Q96EY1-1</id>
        <name>1</name>
        <name>Tid-1(L)</name>
        <sequence type="displayed"/>
    </isoform>
    <isoform>
        <id>Q96EY1-2</id>
        <name>2</name>
        <name>Tid-1(S)</name>
        <sequence type="described" ref="VSP_007425 VSP_007426"/>
    </isoform>
    <isoform>
        <id>Q96EY1-3</id>
        <name>3</name>
        <sequence type="described" ref="VSP_055728 VSP_007425 VSP_007426"/>
    </isoform>
</comment>
<comment type="tissue specificity">
    <text evidence="8 12">Widely expressed with highest levels in heart, liver, lung and skeletal muscles (PubMed:9683573). Also expressed in keratinocytes; expression level and distribution is altered in basal cell carcinomas (PubMed:12783860, PubMed:9683573).</text>
</comment>
<comment type="domain">
    <text>Modulation of apoptosis, i.e. proapoptotic activity of isoform 1 and antiapoptotic activity of isoform 2, is J domain-dependent.</text>
</comment>
<comment type="PTM">
    <text evidence="1">Tyrosine phosphorylated.</text>
</comment>
<comment type="sequence caution" evidence="18">
    <conflict type="erroneous initiation">
        <sequence resource="EMBL-CDS" id="AAF66245"/>
    </conflict>
    <text>Truncated N-terminus.</text>
</comment>
<comment type="sequence caution" evidence="18">
    <conflict type="frameshift">
        <sequence resource="EMBL-CDS" id="AAF66245"/>
    </conflict>
</comment>
<comment type="sequence caution" evidence="18">
    <conflict type="erroneous initiation">
        <sequence resource="EMBL-CDS" id="AAH12343"/>
    </conflict>
    <text>Truncated N-terminus.</text>
</comment>
<comment type="online information" name="Atlas of Genetics and Cytogenetics in Oncology and Haematology">
    <link uri="https://atlasgeneticsoncology.org/gene/40342/DNAJA3"/>
</comment>
<evidence type="ECO:0000250" key="1"/>
<evidence type="ECO:0000250" key="2">
    <source>
        <dbReference type="UniProtKB" id="Q99M87"/>
    </source>
</evidence>
<evidence type="ECO:0000255" key="3"/>
<evidence type="ECO:0000256" key="4">
    <source>
        <dbReference type="SAM" id="MobiDB-lite"/>
    </source>
</evidence>
<evidence type="ECO:0000269" key="5">
    <source>
    </source>
</evidence>
<evidence type="ECO:0000269" key="6">
    <source>
    </source>
</evidence>
<evidence type="ECO:0000269" key="7">
    <source>
    </source>
</evidence>
<evidence type="ECO:0000269" key="8">
    <source>
    </source>
</evidence>
<evidence type="ECO:0000269" key="9">
    <source>
    </source>
</evidence>
<evidence type="ECO:0000269" key="10">
    <source>
    </source>
</evidence>
<evidence type="ECO:0000269" key="11">
    <source>
    </source>
</evidence>
<evidence type="ECO:0000269" key="12">
    <source>
    </source>
</evidence>
<evidence type="ECO:0000269" key="13">
    <source ref="13"/>
</evidence>
<evidence type="ECO:0000303" key="14">
    <source>
    </source>
</evidence>
<evidence type="ECO:0000303" key="15">
    <source>
    </source>
</evidence>
<evidence type="ECO:0000303" key="16">
    <source>
    </source>
</evidence>
<evidence type="ECO:0000303" key="17">
    <source>
    </source>
</evidence>
<evidence type="ECO:0000305" key="18"/>
<evidence type="ECO:0007744" key="19">
    <source>
        <dbReference type="PDB" id="2CTT"/>
    </source>
</evidence>
<evidence type="ECO:0007744" key="20">
    <source>
    </source>
</evidence>
<evidence type="ECO:0007829" key="21">
    <source>
        <dbReference type="PDB" id="2CTT"/>
    </source>
</evidence>
<evidence type="ECO:0007829" key="22">
    <source>
        <dbReference type="PDB" id="2DN9"/>
    </source>
</evidence>
<evidence type="ECO:0007829" key="23">
    <source>
        <dbReference type="PDB" id="6IWS"/>
    </source>
</evidence>
<gene>
    <name type="primary">DNAJA3</name>
    <name type="synonym">HCA57</name>
    <name type="synonym">TID1</name>
</gene>